<gene>
    <name evidence="1" type="primary">nbaC</name>
    <name type="ordered locus">XCV1645</name>
</gene>
<protein>
    <recommendedName>
        <fullName evidence="1">3-hydroxyanthranilate 3,4-dioxygenase</fullName>
        <ecNumber evidence="1">1.13.11.6</ecNumber>
    </recommendedName>
    <alternativeName>
        <fullName evidence="1">3-hydroxyanthranilate oxygenase</fullName>
        <shortName evidence="1">3-HAO</shortName>
    </alternativeName>
    <alternativeName>
        <fullName evidence="1">3-hydroxyanthranilic acid dioxygenase</fullName>
        <shortName evidence="1">HAD</shortName>
    </alternativeName>
</protein>
<dbReference type="EC" id="1.13.11.6" evidence="1"/>
<dbReference type="EMBL" id="AM039952">
    <property type="protein sequence ID" value="CAJ23322.1"/>
    <property type="molecule type" value="Genomic_DNA"/>
</dbReference>
<dbReference type="RefSeq" id="WP_008576309.1">
    <property type="nucleotide sequence ID" value="NZ_CP017190.1"/>
</dbReference>
<dbReference type="SMR" id="Q3BV37"/>
<dbReference type="STRING" id="456327.BJD11_14365"/>
<dbReference type="KEGG" id="xcv:XCV1645"/>
<dbReference type="eggNOG" id="COG0662">
    <property type="taxonomic scope" value="Bacteria"/>
</dbReference>
<dbReference type="HOGENOM" id="CLU_095765_0_0_6"/>
<dbReference type="UniPathway" id="UPA00253">
    <property type="reaction ID" value="UER00330"/>
</dbReference>
<dbReference type="Proteomes" id="UP000007069">
    <property type="component" value="Chromosome"/>
</dbReference>
<dbReference type="GO" id="GO:0000334">
    <property type="term" value="F:3-hydroxyanthranilate 3,4-dioxygenase activity"/>
    <property type="evidence" value="ECO:0007669"/>
    <property type="project" value="UniProtKB-UniRule"/>
</dbReference>
<dbReference type="GO" id="GO:0008198">
    <property type="term" value="F:ferrous iron binding"/>
    <property type="evidence" value="ECO:0007669"/>
    <property type="project" value="UniProtKB-UniRule"/>
</dbReference>
<dbReference type="GO" id="GO:0043420">
    <property type="term" value="P:anthranilate metabolic process"/>
    <property type="evidence" value="ECO:0007669"/>
    <property type="project" value="UniProtKB-UniRule"/>
</dbReference>
<dbReference type="GO" id="GO:0006569">
    <property type="term" value="P:L-tryptophan catabolic process"/>
    <property type="evidence" value="ECO:0007669"/>
    <property type="project" value="UniProtKB-UniRule"/>
</dbReference>
<dbReference type="GO" id="GO:0009435">
    <property type="term" value="P:NAD biosynthetic process"/>
    <property type="evidence" value="ECO:0007669"/>
    <property type="project" value="UniProtKB-UniPathway"/>
</dbReference>
<dbReference type="GO" id="GO:0019805">
    <property type="term" value="P:quinolinate biosynthetic process"/>
    <property type="evidence" value="ECO:0007669"/>
    <property type="project" value="UniProtKB-UniRule"/>
</dbReference>
<dbReference type="CDD" id="cd06123">
    <property type="entry name" value="cupin_HAO"/>
    <property type="match status" value="1"/>
</dbReference>
<dbReference type="Gene3D" id="2.60.120.10">
    <property type="entry name" value="Jelly Rolls"/>
    <property type="match status" value="1"/>
</dbReference>
<dbReference type="HAMAP" id="MF_00825">
    <property type="entry name" value="3_HAO"/>
    <property type="match status" value="1"/>
</dbReference>
<dbReference type="InterPro" id="IPR010329">
    <property type="entry name" value="3hydroanth_dOase"/>
</dbReference>
<dbReference type="InterPro" id="IPR014710">
    <property type="entry name" value="RmlC-like_jellyroll"/>
</dbReference>
<dbReference type="InterPro" id="IPR011051">
    <property type="entry name" value="RmlC_Cupin_sf"/>
</dbReference>
<dbReference type="NCBIfam" id="TIGR03037">
    <property type="entry name" value="anthran_nbaC"/>
    <property type="match status" value="1"/>
</dbReference>
<dbReference type="NCBIfam" id="NF009763">
    <property type="entry name" value="PRK13264.1"/>
    <property type="match status" value="1"/>
</dbReference>
<dbReference type="PANTHER" id="PTHR15497">
    <property type="entry name" value="3-HYDROXYANTHRANILATE 3,4-DIOXYGENASE"/>
    <property type="match status" value="1"/>
</dbReference>
<dbReference type="PANTHER" id="PTHR15497:SF1">
    <property type="entry name" value="3-HYDROXYANTHRANILATE 3,4-DIOXYGENASE"/>
    <property type="match status" value="1"/>
</dbReference>
<dbReference type="Pfam" id="PF06052">
    <property type="entry name" value="3-HAO"/>
    <property type="match status" value="1"/>
</dbReference>
<dbReference type="SUPFAM" id="SSF51182">
    <property type="entry name" value="RmlC-like cupins"/>
    <property type="match status" value="1"/>
</dbReference>
<keyword id="KW-0223">Dioxygenase</keyword>
<keyword id="KW-0408">Iron</keyword>
<keyword id="KW-0479">Metal-binding</keyword>
<keyword id="KW-0560">Oxidoreductase</keyword>
<keyword id="KW-0662">Pyridine nucleotide biosynthesis</keyword>
<sequence length="176" mass="20210">MLIPPINLHAWIEEHRHLLKPPVGNKCIQQDGFIIMVVGGPNARTDYHYDEGPEWFFQLEGEMVLKVQDEGVARDIPIRAGEVFLLPPKVPHSPQRAAGSIGLVIERERLPNEQDGLQWYCPQCNHKLYEAMFPLKNIETDFPPVFDRFYRSLALRTCSQCGHLHPAPERYATVED</sequence>
<proteinExistence type="inferred from homology"/>
<evidence type="ECO:0000255" key="1">
    <source>
        <dbReference type="HAMAP-Rule" id="MF_00825"/>
    </source>
</evidence>
<accession>Q3BV37</accession>
<reference key="1">
    <citation type="journal article" date="2005" name="J. Bacteriol.">
        <title>Insights into genome plasticity and pathogenicity of the plant pathogenic Bacterium Xanthomonas campestris pv. vesicatoria revealed by the complete genome sequence.</title>
        <authorList>
            <person name="Thieme F."/>
            <person name="Koebnik R."/>
            <person name="Bekel T."/>
            <person name="Berger C."/>
            <person name="Boch J."/>
            <person name="Buettner D."/>
            <person name="Caldana C."/>
            <person name="Gaigalat L."/>
            <person name="Goesmann A."/>
            <person name="Kay S."/>
            <person name="Kirchner O."/>
            <person name="Lanz C."/>
            <person name="Linke B."/>
            <person name="McHardy A.C."/>
            <person name="Meyer F."/>
            <person name="Mittenhuber G."/>
            <person name="Nies D.H."/>
            <person name="Niesbach-Kloesgen U."/>
            <person name="Patschkowski T."/>
            <person name="Rueckert C."/>
            <person name="Rupp O."/>
            <person name="Schneiker S."/>
            <person name="Schuster S.C."/>
            <person name="Vorhoelter F.J."/>
            <person name="Weber E."/>
            <person name="Puehler A."/>
            <person name="Bonas U."/>
            <person name="Bartels D."/>
            <person name="Kaiser O."/>
        </authorList>
    </citation>
    <scope>NUCLEOTIDE SEQUENCE [LARGE SCALE GENOMIC DNA]</scope>
    <source>
        <strain>85-10</strain>
    </source>
</reference>
<feature type="chain" id="PRO_0000245480" description="3-hydroxyanthranilate 3,4-dioxygenase">
    <location>
        <begin position="1"/>
        <end position="176"/>
    </location>
</feature>
<feature type="binding site" evidence="1">
    <location>
        <position position="44"/>
    </location>
    <ligand>
        <name>O2</name>
        <dbReference type="ChEBI" id="CHEBI:15379"/>
    </ligand>
</feature>
<feature type="binding site" evidence="1">
    <location>
        <position position="48"/>
    </location>
    <ligand>
        <name>Fe cation</name>
        <dbReference type="ChEBI" id="CHEBI:24875"/>
        <label>1</label>
        <note>catalytic</note>
    </ligand>
</feature>
<feature type="binding site" evidence="1">
    <location>
        <position position="54"/>
    </location>
    <ligand>
        <name>Fe cation</name>
        <dbReference type="ChEBI" id="CHEBI:24875"/>
        <label>1</label>
        <note>catalytic</note>
    </ligand>
</feature>
<feature type="binding site" evidence="1">
    <location>
        <position position="54"/>
    </location>
    <ligand>
        <name>substrate</name>
    </ligand>
</feature>
<feature type="binding site" evidence="1">
    <location>
        <position position="92"/>
    </location>
    <ligand>
        <name>Fe cation</name>
        <dbReference type="ChEBI" id="CHEBI:24875"/>
        <label>1</label>
        <note>catalytic</note>
    </ligand>
</feature>
<feature type="binding site" evidence="1">
    <location>
        <position position="96"/>
    </location>
    <ligand>
        <name>substrate</name>
    </ligand>
</feature>
<feature type="binding site" evidence="1">
    <location>
        <position position="106"/>
    </location>
    <ligand>
        <name>substrate</name>
    </ligand>
</feature>
<feature type="binding site" evidence="1">
    <location>
        <position position="121"/>
    </location>
    <ligand>
        <name>Fe cation</name>
        <dbReference type="ChEBI" id="CHEBI:24875"/>
        <label>2</label>
    </ligand>
</feature>
<feature type="binding site" evidence="1">
    <location>
        <position position="124"/>
    </location>
    <ligand>
        <name>Fe cation</name>
        <dbReference type="ChEBI" id="CHEBI:24875"/>
        <label>2</label>
    </ligand>
</feature>
<feature type="binding site" evidence="1">
    <location>
        <position position="158"/>
    </location>
    <ligand>
        <name>Fe cation</name>
        <dbReference type="ChEBI" id="CHEBI:24875"/>
        <label>2</label>
    </ligand>
</feature>
<feature type="binding site" evidence="1">
    <location>
        <position position="161"/>
    </location>
    <ligand>
        <name>Fe cation</name>
        <dbReference type="ChEBI" id="CHEBI:24875"/>
        <label>2</label>
    </ligand>
</feature>
<name>3HAO_XANE5</name>
<organism>
    <name type="scientific">Xanthomonas euvesicatoria pv. vesicatoria (strain 85-10)</name>
    <name type="common">Xanthomonas campestris pv. vesicatoria</name>
    <dbReference type="NCBI Taxonomy" id="316273"/>
    <lineage>
        <taxon>Bacteria</taxon>
        <taxon>Pseudomonadati</taxon>
        <taxon>Pseudomonadota</taxon>
        <taxon>Gammaproteobacteria</taxon>
        <taxon>Lysobacterales</taxon>
        <taxon>Lysobacteraceae</taxon>
        <taxon>Xanthomonas</taxon>
    </lineage>
</organism>
<comment type="function">
    <text evidence="1">Catalyzes the oxidative ring opening of 3-hydroxyanthranilate to 2-amino-3-carboxymuconate semialdehyde, which spontaneously cyclizes to quinolinate.</text>
</comment>
<comment type="catalytic activity">
    <reaction evidence="1">
        <text>3-hydroxyanthranilate + O2 = (2Z,4Z)-2-amino-3-carboxymuconate 6-semialdehyde</text>
        <dbReference type="Rhea" id="RHEA:17953"/>
        <dbReference type="ChEBI" id="CHEBI:15379"/>
        <dbReference type="ChEBI" id="CHEBI:36559"/>
        <dbReference type="ChEBI" id="CHEBI:77612"/>
        <dbReference type="EC" id="1.13.11.6"/>
    </reaction>
</comment>
<comment type="cofactor">
    <cofactor evidence="1">
        <name>Fe(2+)</name>
        <dbReference type="ChEBI" id="CHEBI:29033"/>
    </cofactor>
    <text evidence="1">Binds 2 Fe(2+) ions per subunit.</text>
</comment>
<comment type="pathway">
    <text evidence="1">Cofactor biosynthesis; NAD(+) biosynthesis; quinolinate from L-kynurenine: step 3/3.</text>
</comment>
<comment type="subunit">
    <text evidence="1">Homodimer.</text>
</comment>
<comment type="similarity">
    <text evidence="1">Belongs to the 3-HAO family.</text>
</comment>